<keyword id="KW-0067">ATP-binding</keyword>
<keyword id="KW-0963">Cytoplasm</keyword>
<keyword id="KW-0418">Kinase</keyword>
<keyword id="KW-0547">Nucleotide-binding</keyword>
<keyword id="KW-0808">Transferase</keyword>
<feature type="chain" id="PRO_1000017866" description="Uridine kinase">
    <location>
        <begin position="1"/>
        <end position="212"/>
    </location>
</feature>
<feature type="binding site" evidence="1">
    <location>
        <begin position="13"/>
        <end position="20"/>
    </location>
    <ligand>
        <name>ATP</name>
        <dbReference type="ChEBI" id="CHEBI:30616"/>
    </ligand>
</feature>
<gene>
    <name evidence="1" type="primary">udk</name>
    <name type="ordered locus">BT9727_4113</name>
</gene>
<reference key="1">
    <citation type="journal article" date="2006" name="J. Bacteriol.">
        <title>Pathogenomic sequence analysis of Bacillus cereus and Bacillus thuringiensis isolates closely related to Bacillus anthracis.</title>
        <authorList>
            <person name="Han C.S."/>
            <person name="Xie G."/>
            <person name="Challacombe J.F."/>
            <person name="Altherr M.R."/>
            <person name="Bhotika S.S."/>
            <person name="Bruce D."/>
            <person name="Campbell C.S."/>
            <person name="Campbell M.L."/>
            <person name="Chen J."/>
            <person name="Chertkov O."/>
            <person name="Cleland C."/>
            <person name="Dimitrijevic M."/>
            <person name="Doggett N.A."/>
            <person name="Fawcett J.J."/>
            <person name="Glavina T."/>
            <person name="Goodwin L.A."/>
            <person name="Hill K.K."/>
            <person name="Hitchcock P."/>
            <person name="Jackson P.J."/>
            <person name="Keim P."/>
            <person name="Kewalramani A.R."/>
            <person name="Longmire J."/>
            <person name="Lucas S."/>
            <person name="Malfatti S."/>
            <person name="McMurry K."/>
            <person name="Meincke L.J."/>
            <person name="Misra M."/>
            <person name="Moseman B.L."/>
            <person name="Mundt M."/>
            <person name="Munk A.C."/>
            <person name="Okinaka R.T."/>
            <person name="Parson-Quintana B."/>
            <person name="Reilly L.P."/>
            <person name="Richardson P."/>
            <person name="Robinson D.L."/>
            <person name="Rubin E."/>
            <person name="Saunders E."/>
            <person name="Tapia R."/>
            <person name="Tesmer J.G."/>
            <person name="Thayer N."/>
            <person name="Thompson L.S."/>
            <person name="Tice H."/>
            <person name="Ticknor L.O."/>
            <person name="Wills P.L."/>
            <person name="Brettin T.S."/>
            <person name="Gilna P."/>
        </authorList>
    </citation>
    <scope>NUCLEOTIDE SEQUENCE [LARGE SCALE GENOMIC DNA]</scope>
    <source>
        <strain>97-27</strain>
    </source>
</reference>
<evidence type="ECO:0000255" key="1">
    <source>
        <dbReference type="HAMAP-Rule" id="MF_00551"/>
    </source>
</evidence>
<accession>Q6HDE5</accession>
<dbReference type="EC" id="2.7.1.48" evidence="1"/>
<dbReference type="EMBL" id="AE017355">
    <property type="protein sequence ID" value="AAT63661.1"/>
    <property type="molecule type" value="Genomic_DNA"/>
</dbReference>
<dbReference type="RefSeq" id="WP_000537085.1">
    <property type="nucleotide sequence ID" value="NC_005957.1"/>
</dbReference>
<dbReference type="RefSeq" id="YP_038431.1">
    <property type="nucleotide sequence ID" value="NC_005957.1"/>
</dbReference>
<dbReference type="SMR" id="Q6HDE5"/>
<dbReference type="KEGG" id="btk:BT9727_4113"/>
<dbReference type="PATRIC" id="fig|281309.8.peg.4390"/>
<dbReference type="HOGENOM" id="CLU_021278_1_2_9"/>
<dbReference type="UniPathway" id="UPA00574">
    <property type="reaction ID" value="UER00637"/>
</dbReference>
<dbReference type="UniPathway" id="UPA00579">
    <property type="reaction ID" value="UER00640"/>
</dbReference>
<dbReference type="Proteomes" id="UP000001301">
    <property type="component" value="Chromosome"/>
</dbReference>
<dbReference type="GO" id="GO:0005737">
    <property type="term" value="C:cytoplasm"/>
    <property type="evidence" value="ECO:0007669"/>
    <property type="project" value="UniProtKB-SubCell"/>
</dbReference>
<dbReference type="GO" id="GO:0005524">
    <property type="term" value="F:ATP binding"/>
    <property type="evidence" value="ECO:0007669"/>
    <property type="project" value="UniProtKB-UniRule"/>
</dbReference>
<dbReference type="GO" id="GO:0043771">
    <property type="term" value="F:cytidine kinase activity"/>
    <property type="evidence" value="ECO:0007669"/>
    <property type="project" value="RHEA"/>
</dbReference>
<dbReference type="GO" id="GO:0004849">
    <property type="term" value="F:uridine kinase activity"/>
    <property type="evidence" value="ECO:0007669"/>
    <property type="project" value="UniProtKB-UniRule"/>
</dbReference>
<dbReference type="GO" id="GO:0044211">
    <property type="term" value="P:CTP salvage"/>
    <property type="evidence" value="ECO:0007669"/>
    <property type="project" value="UniProtKB-UniRule"/>
</dbReference>
<dbReference type="GO" id="GO:0044206">
    <property type="term" value="P:UMP salvage"/>
    <property type="evidence" value="ECO:0007669"/>
    <property type="project" value="UniProtKB-UniRule"/>
</dbReference>
<dbReference type="CDD" id="cd02023">
    <property type="entry name" value="UMPK"/>
    <property type="match status" value="1"/>
</dbReference>
<dbReference type="Gene3D" id="3.40.50.300">
    <property type="entry name" value="P-loop containing nucleotide triphosphate hydrolases"/>
    <property type="match status" value="1"/>
</dbReference>
<dbReference type="HAMAP" id="MF_00551">
    <property type="entry name" value="Uridine_kinase"/>
    <property type="match status" value="1"/>
</dbReference>
<dbReference type="InterPro" id="IPR027417">
    <property type="entry name" value="P-loop_NTPase"/>
</dbReference>
<dbReference type="InterPro" id="IPR006083">
    <property type="entry name" value="PRK/URK"/>
</dbReference>
<dbReference type="InterPro" id="IPR026008">
    <property type="entry name" value="Uridine_kinase"/>
</dbReference>
<dbReference type="InterPro" id="IPR000764">
    <property type="entry name" value="Uridine_kinase-like"/>
</dbReference>
<dbReference type="NCBIfam" id="NF004018">
    <property type="entry name" value="PRK05480.1"/>
    <property type="match status" value="1"/>
</dbReference>
<dbReference type="NCBIfam" id="TIGR00235">
    <property type="entry name" value="udk"/>
    <property type="match status" value="1"/>
</dbReference>
<dbReference type="PANTHER" id="PTHR10285">
    <property type="entry name" value="URIDINE KINASE"/>
    <property type="match status" value="1"/>
</dbReference>
<dbReference type="Pfam" id="PF00485">
    <property type="entry name" value="PRK"/>
    <property type="match status" value="1"/>
</dbReference>
<dbReference type="PRINTS" id="PR00988">
    <property type="entry name" value="URIDINKINASE"/>
</dbReference>
<dbReference type="SUPFAM" id="SSF52540">
    <property type="entry name" value="P-loop containing nucleoside triphosphate hydrolases"/>
    <property type="match status" value="1"/>
</dbReference>
<name>URK_BACHK</name>
<protein>
    <recommendedName>
        <fullName evidence="1">Uridine kinase</fullName>
        <ecNumber evidence="1">2.7.1.48</ecNumber>
    </recommendedName>
    <alternativeName>
        <fullName evidence="1">Cytidine monophosphokinase</fullName>
    </alternativeName>
    <alternativeName>
        <fullName evidence="1">Uridine monophosphokinase</fullName>
    </alternativeName>
</protein>
<proteinExistence type="inferred from homology"/>
<sequence length="212" mass="24338">MGTNKPVVIGIAGGSGSGKTSVTKAIFDHFKGHSILILEQDYYYKDQSHLPMEERLKTNYDHPLAFDNDLLIEHLQQLLAYKQVDKPVYDYTLHTRSEEIIPVEPKDVIILEGILILEDPRLCELMDIKLFVDTDADLRILRRMQRDIKERGRTMDSVIDQYVNVVRPMHNQFIEPSKKFADIIIPEGGQNHVAIDIMVTKIATILEQKVNL</sequence>
<organism>
    <name type="scientific">Bacillus thuringiensis subsp. konkukian (strain 97-27)</name>
    <dbReference type="NCBI Taxonomy" id="281309"/>
    <lineage>
        <taxon>Bacteria</taxon>
        <taxon>Bacillati</taxon>
        <taxon>Bacillota</taxon>
        <taxon>Bacilli</taxon>
        <taxon>Bacillales</taxon>
        <taxon>Bacillaceae</taxon>
        <taxon>Bacillus</taxon>
        <taxon>Bacillus cereus group</taxon>
    </lineage>
</organism>
<comment type="catalytic activity">
    <reaction evidence="1">
        <text>uridine + ATP = UMP + ADP + H(+)</text>
        <dbReference type="Rhea" id="RHEA:16825"/>
        <dbReference type="ChEBI" id="CHEBI:15378"/>
        <dbReference type="ChEBI" id="CHEBI:16704"/>
        <dbReference type="ChEBI" id="CHEBI:30616"/>
        <dbReference type="ChEBI" id="CHEBI:57865"/>
        <dbReference type="ChEBI" id="CHEBI:456216"/>
        <dbReference type="EC" id="2.7.1.48"/>
    </reaction>
</comment>
<comment type="catalytic activity">
    <reaction evidence="1">
        <text>cytidine + ATP = CMP + ADP + H(+)</text>
        <dbReference type="Rhea" id="RHEA:24674"/>
        <dbReference type="ChEBI" id="CHEBI:15378"/>
        <dbReference type="ChEBI" id="CHEBI:17562"/>
        <dbReference type="ChEBI" id="CHEBI:30616"/>
        <dbReference type="ChEBI" id="CHEBI:60377"/>
        <dbReference type="ChEBI" id="CHEBI:456216"/>
        <dbReference type="EC" id="2.7.1.48"/>
    </reaction>
</comment>
<comment type="pathway">
    <text evidence="1">Pyrimidine metabolism; CTP biosynthesis via salvage pathway; CTP from cytidine: step 1/3.</text>
</comment>
<comment type="pathway">
    <text evidence="1">Pyrimidine metabolism; UMP biosynthesis via salvage pathway; UMP from uridine: step 1/1.</text>
</comment>
<comment type="subcellular location">
    <subcellularLocation>
        <location evidence="1">Cytoplasm</location>
    </subcellularLocation>
</comment>
<comment type="similarity">
    <text evidence="1">Belongs to the uridine kinase family.</text>
</comment>